<feature type="chain" id="PRO_0000219784" description="Photosystem II reaction center protein L">
    <location>
        <begin position="1"/>
        <end position="38"/>
    </location>
</feature>
<feature type="transmembrane region" description="Helical" evidence="1">
    <location>
        <begin position="17"/>
        <end position="37"/>
    </location>
</feature>
<keyword id="KW-0150">Chloroplast</keyword>
<keyword id="KW-0472">Membrane</keyword>
<keyword id="KW-0602">Photosynthesis</keyword>
<keyword id="KW-0604">Photosystem II</keyword>
<keyword id="KW-0934">Plastid</keyword>
<keyword id="KW-0674">Reaction center</keyword>
<keyword id="KW-0793">Thylakoid</keyword>
<keyword id="KW-0812">Transmembrane</keyword>
<keyword id="KW-1133">Transmembrane helix</keyword>
<sequence>MTQSNPNEQNVELNRTSLYWGLLLIFVLAVLFSNYSFN</sequence>
<accession>Q7IW42</accession>
<dbReference type="EMBL" id="AF188847">
    <property type="protein sequence ID" value="AAF73301.1"/>
    <property type="molecule type" value="Genomic_DNA"/>
</dbReference>
<dbReference type="RefSeq" id="YP_009113742.1">
    <property type="nucleotide sequence ID" value="NC_026040.1"/>
</dbReference>
<dbReference type="SMR" id="Q7IW42"/>
<dbReference type="GeneID" id="22832220"/>
<dbReference type="GO" id="GO:0009535">
    <property type="term" value="C:chloroplast thylakoid membrane"/>
    <property type="evidence" value="ECO:0007669"/>
    <property type="project" value="UniProtKB-SubCell"/>
</dbReference>
<dbReference type="GO" id="GO:0009539">
    <property type="term" value="C:photosystem II reaction center"/>
    <property type="evidence" value="ECO:0007669"/>
    <property type="project" value="InterPro"/>
</dbReference>
<dbReference type="GO" id="GO:0015979">
    <property type="term" value="P:photosynthesis"/>
    <property type="evidence" value="ECO:0007669"/>
    <property type="project" value="UniProtKB-UniRule"/>
</dbReference>
<dbReference type="HAMAP" id="MF_01317">
    <property type="entry name" value="PSII_PsbL"/>
    <property type="match status" value="1"/>
</dbReference>
<dbReference type="InterPro" id="IPR003372">
    <property type="entry name" value="PSII_PsbL"/>
</dbReference>
<dbReference type="InterPro" id="IPR037266">
    <property type="entry name" value="PSII_PsbL_sf"/>
</dbReference>
<dbReference type="Pfam" id="PF02419">
    <property type="entry name" value="PsbL"/>
    <property type="match status" value="1"/>
</dbReference>
<dbReference type="SUPFAM" id="SSF161017">
    <property type="entry name" value="Photosystem II reaction center protein L, PsbL"/>
    <property type="match status" value="1"/>
</dbReference>
<organism>
    <name type="scientific">Zamia furfuracea</name>
    <name type="common">Cardboard cycad</name>
    <name type="synonym">Jamaican sago tree</name>
    <dbReference type="NCBI Taxonomy" id="42329"/>
    <lineage>
        <taxon>Eukaryota</taxon>
        <taxon>Viridiplantae</taxon>
        <taxon>Streptophyta</taxon>
        <taxon>Embryophyta</taxon>
        <taxon>Tracheophyta</taxon>
        <taxon>Spermatophyta</taxon>
        <taxon>Cycadidae</taxon>
        <taxon>Cycadales</taxon>
        <taxon>Zamiaceae</taxon>
        <taxon>Zamia</taxon>
    </lineage>
</organism>
<evidence type="ECO:0000255" key="1">
    <source>
        <dbReference type="HAMAP-Rule" id="MF_01317"/>
    </source>
</evidence>
<proteinExistence type="inferred from homology"/>
<comment type="function">
    <text evidence="1">One of the components of the core complex of photosystem II (PSII). PSII is a light-driven water:plastoquinone oxidoreductase that uses light energy to abstract electrons from H(2)O, generating O(2) and a proton gradient subsequently used for ATP formation. It consists of a core antenna complex that captures photons, and an electron transfer chain that converts photonic excitation into a charge separation. This subunit is found at the monomer-monomer interface and is required for correct PSII assembly and/or dimerization.</text>
</comment>
<comment type="subunit">
    <text evidence="1">PSII is composed of 1 copy each of membrane proteins PsbA, PsbB, PsbC, PsbD, PsbE, PsbF, PsbH, PsbI, PsbJ, PsbK, PsbL, PsbM, PsbT, PsbX, PsbY, PsbZ, Psb30/Ycf12, at least 3 peripheral proteins of the oxygen-evolving complex and a large number of cofactors. It forms dimeric complexes.</text>
</comment>
<comment type="subcellular location">
    <subcellularLocation>
        <location evidence="1">Plastid</location>
        <location evidence="1">Chloroplast thylakoid membrane</location>
        <topology evidence="1">Single-pass membrane protein</topology>
    </subcellularLocation>
</comment>
<comment type="similarity">
    <text evidence="1">Belongs to the PsbL family.</text>
</comment>
<reference key="1">
    <citation type="journal article" date="2000" name="Curr. Genet.">
        <title>Evolutionary significance of an unusual chloroplast DNA inversion found in two basal angiosperm lineages.</title>
        <authorList>
            <person name="Graham S.W."/>
            <person name="Olmstead R.G."/>
        </authorList>
    </citation>
    <scope>NUCLEOTIDE SEQUENCE [GENOMIC DNA]</scope>
</reference>
<geneLocation type="chloroplast"/>
<protein>
    <recommendedName>
        <fullName evidence="1">Photosystem II reaction center protein L</fullName>
        <shortName evidence="1">PSII-L</shortName>
    </recommendedName>
</protein>
<gene>
    <name evidence="1" type="primary">psbL</name>
</gene>
<name>PSBL_ZAMFU</name>